<evidence type="ECO:0000255" key="1"/>
<evidence type="ECO:0000256" key="2">
    <source>
        <dbReference type="SAM" id="MobiDB-lite"/>
    </source>
</evidence>
<evidence type="ECO:0000269" key="3">
    <source>
    </source>
</evidence>
<evidence type="ECO:0000269" key="4">
    <source>
    </source>
</evidence>
<evidence type="ECO:0000269" key="5">
    <source>
    </source>
</evidence>
<evidence type="ECO:0000269" key="6">
    <source>
    </source>
</evidence>
<evidence type="ECO:0000269" key="7">
    <source>
    </source>
</evidence>
<evidence type="ECO:0000303" key="8">
    <source>
    </source>
</evidence>
<evidence type="ECO:0000305" key="9"/>
<evidence type="ECO:0000312" key="10">
    <source>
        <dbReference type="EMBL" id="AAM18102.1"/>
    </source>
</evidence>
<evidence type="ECO:0000312" key="11">
    <source>
        <dbReference type="WormBase" id="B0495.4"/>
    </source>
</evidence>
<name>NHX2_CAEEL</name>
<feature type="chain" id="PRO_0000424423" description="Na(+)/H(+) exchanger protein 2">
    <location>
        <begin position="1"/>
        <end position="644"/>
    </location>
</feature>
<feature type="topological domain" description="Cytoplasmic" evidence="1">
    <location>
        <begin position="1"/>
        <end position="6"/>
    </location>
</feature>
<feature type="intramembrane region" description="Helical" evidence="1">
    <location>
        <begin position="7"/>
        <end position="27"/>
    </location>
</feature>
<feature type="topological domain" description="Cytoplasmic" evidence="1">
    <location>
        <begin position="28"/>
        <end position="51"/>
    </location>
</feature>
<feature type="intramembrane region" description="Helical" evidence="1">
    <location>
        <begin position="52"/>
        <end position="72"/>
    </location>
</feature>
<feature type="topological domain" description="Cytoplasmic" evidence="1">
    <location>
        <begin position="73"/>
        <end position="78"/>
    </location>
</feature>
<feature type="transmembrane region" description="Helical" evidence="1">
    <location>
        <begin position="79"/>
        <end position="99"/>
    </location>
</feature>
<feature type="topological domain" description="Extracellular" evidence="1">
    <location>
        <begin position="100"/>
        <end position="107"/>
    </location>
</feature>
<feature type="transmembrane region" description="Helical" evidence="1">
    <location>
        <begin position="108"/>
        <end position="128"/>
    </location>
</feature>
<feature type="topological domain" description="Cytoplasmic" evidence="1">
    <location>
        <begin position="129"/>
        <end position="137"/>
    </location>
</feature>
<feature type="transmembrane region" description="Helical" evidence="1">
    <location>
        <begin position="138"/>
        <end position="158"/>
    </location>
</feature>
<feature type="topological domain" description="Extracellular" evidence="1">
    <location>
        <begin position="159"/>
        <end position="173"/>
    </location>
</feature>
<feature type="transmembrane region" description="Helical" evidence="1">
    <location>
        <begin position="174"/>
        <end position="194"/>
    </location>
</feature>
<feature type="topological domain" description="Cytoplasmic" evidence="1">
    <location>
        <begin position="195"/>
        <end position="201"/>
    </location>
</feature>
<feature type="transmembrane region" description="Helical" evidence="1">
    <location>
        <begin position="202"/>
        <end position="222"/>
    </location>
</feature>
<feature type="topological domain" description="Extracellular" evidence="1">
    <location>
        <begin position="223"/>
        <end position="244"/>
    </location>
</feature>
<feature type="transmembrane region" description="Helical" evidence="1">
    <location>
        <begin position="245"/>
        <end position="265"/>
    </location>
</feature>
<feature type="topological domain" description="Cytoplasmic" evidence="1">
    <location>
        <begin position="266"/>
        <end position="294"/>
    </location>
</feature>
<feature type="transmembrane region" description="Helical" evidence="1">
    <location>
        <begin position="295"/>
        <end position="315"/>
    </location>
</feature>
<feature type="topological domain" description="Extracellular" evidence="1">
    <location>
        <begin position="316"/>
        <end position="333"/>
    </location>
</feature>
<feature type="transmembrane region" description="Helical" evidence="1">
    <location>
        <begin position="334"/>
        <end position="354"/>
    </location>
</feature>
<feature type="topological domain" description="Cytoplasmic" evidence="1">
    <location>
        <begin position="355"/>
        <end position="364"/>
    </location>
</feature>
<feature type="transmembrane region" description="Helical" evidence="1">
    <location>
        <begin position="365"/>
        <end position="385"/>
    </location>
</feature>
<feature type="topological domain" description="Extracellular" evidence="1">
    <location>
        <begin position="386"/>
        <end position="401"/>
    </location>
</feature>
<feature type="intramembrane region" description="Helical" evidence="1">
    <location>
        <begin position="402"/>
        <end position="422"/>
    </location>
</feature>
<feature type="topological domain" description="Extracellular" evidence="1">
    <location>
        <begin position="423"/>
        <end position="429"/>
    </location>
</feature>
<feature type="transmembrane region" description="Helical" evidence="1">
    <location>
        <begin position="430"/>
        <end position="450"/>
    </location>
</feature>
<feature type="topological domain" description="Cytoplasmic" evidence="1">
    <location>
        <begin position="451"/>
        <end position="644"/>
    </location>
</feature>
<feature type="region of interest" description="Disordered" evidence="2">
    <location>
        <begin position="621"/>
        <end position="644"/>
    </location>
</feature>
<feature type="compositionally biased region" description="Acidic residues" evidence="2">
    <location>
        <begin position="622"/>
        <end position="636"/>
    </location>
</feature>
<proteinExistence type="evidence at transcript level"/>
<organism>
    <name type="scientific">Caenorhabditis elegans</name>
    <dbReference type="NCBI Taxonomy" id="6239"/>
    <lineage>
        <taxon>Eukaryota</taxon>
        <taxon>Metazoa</taxon>
        <taxon>Ecdysozoa</taxon>
        <taxon>Nematoda</taxon>
        <taxon>Chromadorea</taxon>
        <taxon>Rhabditida</taxon>
        <taxon>Rhabditina</taxon>
        <taxon>Rhabditomorpha</taxon>
        <taxon>Rhabditoidea</taxon>
        <taxon>Rhabditidae</taxon>
        <taxon>Peloderinae</taxon>
        <taxon>Caenorhabditis</taxon>
    </lineage>
</organism>
<reference evidence="9 10" key="1">
    <citation type="journal article" date="2002" name="J. Biol. Chem.">
        <title>The NHX family of Na+-H+ exchangers in Caenorhabditis elegans.</title>
        <authorList>
            <person name="Nehrke K."/>
            <person name="Melvin J.E."/>
        </authorList>
    </citation>
    <scope>NUCLEOTIDE SEQUENCE [MRNA]</scope>
    <scope>SUBCELLULAR LOCATION</scope>
    <scope>TISSUE SPECIFICITY</scope>
    <scope>DEVELOPMENTAL STAGE</scope>
</reference>
<reference key="2">
    <citation type="journal article" date="1998" name="Science">
        <title>Genome sequence of the nematode C. elegans: a platform for investigating biology.</title>
        <authorList>
            <consortium name="The C. elegans sequencing consortium"/>
        </authorList>
    </citation>
    <scope>NUCLEOTIDE SEQUENCE [LARGE SCALE GENOMIC DNA]</scope>
    <source>
        <strain>Bristol N2</strain>
    </source>
</reference>
<reference evidence="9" key="3">
    <citation type="journal article" date="2003" name="J. Biol. Chem.">
        <title>A reduction in intestinal cell pHi due to loss of the Caenorhabditis elegans Na+/H+ exchanger NHX-2 increases life span.</title>
        <authorList>
            <person name="Nehrke K."/>
        </authorList>
    </citation>
    <scope>FUNCTION</scope>
    <scope>SUBCELLULAR LOCATION</scope>
    <scope>TISSUE SPECIFICITY</scope>
    <scope>DISRUPTION PHENOTYPE</scope>
</reference>
<reference evidence="9" key="4">
    <citation type="journal article" date="2008" name="Curr. Biol.">
        <title>Oscillatory transepithelial H(+) flux regulates a rhythmic behavior in C. elegans.</title>
        <authorList>
            <person name="Pfeiffer J."/>
            <person name="Johnson D."/>
            <person name="Nehrke K."/>
        </authorList>
    </citation>
    <scope>FUNCTION</scope>
    <scope>DISRUPTION PHENOTYPE</scope>
</reference>
<reference evidence="9" key="5">
    <citation type="journal article" date="2009" name="Aging Cell">
        <title>Oxidative stress and longevity in Caenorhabditis elegans as mediated by SKN-1.</title>
        <authorList>
            <person name="Park S.K."/>
            <person name="Tedesco P.M."/>
            <person name="Johnson T.E."/>
        </authorList>
    </citation>
    <scope>DISRUPTION PHENOTYPE</scope>
</reference>
<reference evidence="9" key="6">
    <citation type="journal article" date="2009" name="PLoS ONE">
        <title>How the intestinal peptide transporter PEPT-1 contributes to an obesity phenotype in Caenorhabditits elegans.</title>
        <authorList>
            <person name="Spanier B."/>
            <person name="Lasch K."/>
            <person name="Marsch S."/>
            <person name="Benner J."/>
            <person name="Liao W."/>
            <person name="Hu H."/>
            <person name="Kienberger H."/>
            <person name="Eisenreich W."/>
            <person name="Daniel H."/>
        </authorList>
    </citation>
    <scope>DISRUPTION PHENOTYPE</scope>
</reference>
<accession>Q8T5S1</accession>
<accession>Q09432</accession>
<sequence>MSLLRRPWVLVVGLLLIMSYVGAECEEEEKEYPSRYPIAYFEWENVKIPMTICLWLIGASIAKIIFNLIPHLNELFPDSALLIMIGLIIGIIFKLIGVNKNAFFLESEVFMLYLLPPLVFDAGYFMPARQFFDNFGSILCFAMIGTSFNIVAIALSLWAISLTGLFSVETPLMHMLLFGSVAADVDPVAVIVIFEELKVNEVLFIAVFGESLLNDGVAVVLYRMFLTFSEIGTENLITSDYINGGVSFLVVAFGGIGIGLLFAFLTSLVTRFARDEEVKVLNSVFILILPYTCYLCGELFGLSSIMAIVFCGAAMRQYCRENVDPDTVKATESFIKVLSLASETVIFVFLGLSTVSSNHHWDTSFIVLTVVFCLIYRTLGVVVMCYFLNKYRLNKYTKVDQFIMAYGGLRGAIAYGLVVAIPDFIPGKNMFVTSCIIVIYFTVFLQGITLKPIAEFLQVEKKNVHSKNMIEHIYSELIDTTMAGMEDIAGFKGHHWIRDSWNALNNNYLRPILVNKNNMKEMDKTKLVRKYKHLVDEDAKKIARGDLNSNMVFTKALIEHTRSRTNTMIDGVSSTSKIDFTKHMKENFGVTVYDDHSTVPMTPTHLFQETTEVEYSVRSEINDNDGFENDGYESDESGSFHERV</sequence>
<comment type="function">
    <text evidence="4 5">Na(+)/H(+) antiporter that promotes normal di- or tripeptide transporter function, recovery following the peptide-induced acidification of the intestinal cytoplasm and maintenance of the peptide-dependent intestinal pH homeostasis. Regulator of free fatty acid uptake from the diet together with the dipeptide transporter pept-1. May play a timekeeper role in defecation cycle but is not necessary for pbo-4-dependent proton release. May play a role in the regulation of lifespan independent of the stress response pathway.</text>
</comment>
<comment type="subcellular location">
    <subcellularLocation>
        <location evidence="3 4">Apical cell membrane</location>
        <topology evidence="3 4">Multi-pass membrane protein</topology>
        <orientation evidence="3 4">Lumenal side</orientation>
    </subcellularLocation>
    <text evidence="3 4">Colocalizes with pept-1 along the apical membrane of the intestinal cells.</text>
</comment>
<comment type="tissue specificity">
    <text evidence="3 4">Expressed uniformly in the intestinal epithelial cells.</text>
</comment>
<comment type="developmental stage">
    <text evidence="3">Biphasic expression pattern with high expression in the L1 and L2 larval stages and gradual decrease through adult stages.</text>
</comment>
<comment type="disruption phenotype">
    <text evidence="4 5 6 7">RNAi-mediated knockdown of the protein causes worms to become extremely lean and transparent. Slower progression through the larval stages, in particular the L1 and L2 stages. Increase in average life span, decreased brood size and loss of fat storage granules in the intestine leading to decreased opacity. Reduced rate of pharyngeal pumping, reduced size of proton pulses inside the cells, increased intracellular acidification, reduced uptake of fatty acids, and doubling of the defecation period.</text>
</comment>
<comment type="similarity">
    <text evidence="1">Belongs to the monovalent cation:proton antiporter 1 (CPA1) transporter (TC 2.A.36) family.</text>
</comment>
<dbReference type="EMBL" id="AF497824">
    <property type="protein sequence ID" value="AAM18102.1"/>
    <property type="molecule type" value="mRNA"/>
</dbReference>
<dbReference type="EMBL" id="FO080132">
    <property type="protein sequence ID" value="CCD61472.2"/>
    <property type="molecule type" value="Genomic_DNA"/>
</dbReference>
<dbReference type="PIR" id="H88215">
    <property type="entry name" value="H88215"/>
</dbReference>
<dbReference type="RefSeq" id="NP_495614.4">
    <property type="nucleotide sequence ID" value="NM_063213.5"/>
</dbReference>
<dbReference type="SMR" id="Q8T5S1"/>
<dbReference type="FunCoup" id="Q8T5S1">
    <property type="interactions" value="51"/>
</dbReference>
<dbReference type="STRING" id="6239.B0495.4.1"/>
<dbReference type="TCDB" id="2.A.36.1.8">
    <property type="family name" value="the monovalent cation:proton antiporter-1 (cpa1) family"/>
</dbReference>
<dbReference type="PaxDb" id="6239-B0495.4"/>
<dbReference type="PeptideAtlas" id="Q8T5S1"/>
<dbReference type="EnsemblMetazoa" id="B0495.4.1">
    <property type="protein sequence ID" value="B0495.4.1"/>
    <property type="gene ID" value="WBGene00003730"/>
</dbReference>
<dbReference type="GeneID" id="174242"/>
<dbReference type="KEGG" id="cel:CELE_B0495.4"/>
<dbReference type="UCSC" id="B0495.4">
    <property type="organism name" value="c. elegans"/>
</dbReference>
<dbReference type="AGR" id="WB:WBGene00003730"/>
<dbReference type="CTD" id="174242"/>
<dbReference type="WormBase" id="B0495.4">
    <property type="protein sequence ID" value="CE48832"/>
    <property type="gene ID" value="WBGene00003730"/>
    <property type="gene designation" value="nhx-2"/>
</dbReference>
<dbReference type="eggNOG" id="KOG1966">
    <property type="taxonomic scope" value="Eukaryota"/>
</dbReference>
<dbReference type="GeneTree" id="ENSGT00970000196622"/>
<dbReference type="HOGENOM" id="CLU_005912_4_3_1"/>
<dbReference type="InParanoid" id="Q8T5S1"/>
<dbReference type="OMA" id="QNIQPRG"/>
<dbReference type="OrthoDB" id="196264at2759"/>
<dbReference type="Reactome" id="R-CEL-425986">
    <property type="pathway name" value="Sodium/Proton exchangers"/>
</dbReference>
<dbReference type="PRO" id="PR:Q8T5S1"/>
<dbReference type="Proteomes" id="UP000001940">
    <property type="component" value="Chromosome II"/>
</dbReference>
<dbReference type="Bgee" id="WBGene00003730">
    <property type="expression patterns" value="Expressed in larva and 3 other cell types or tissues"/>
</dbReference>
<dbReference type="GO" id="GO:0016324">
    <property type="term" value="C:apical plasma membrane"/>
    <property type="evidence" value="ECO:0000314"/>
    <property type="project" value="WormBase"/>
</dbReference>
<dbReference type="GO" id="GO:0005886">
    <property type="term" value="C:plasma membrane"/>
    <property type="evidence" value="ECO:0000318"/>
    <property type="project" value="GO_Central"/>
</dbReference>
<dbReference type="GO" id="GO:0015386">
    <property type="term" value="F:potassium:proton antiporter activity"/>
    <property type="evidence" value="ECO:0000318"/>
    <property type="project" value="GO_Central"/>
</dbReference>
<dbReference type="GO" id="GO:0015385">
    <property type="term" value="F:sodium:proton antiporter activity"/>
    <property type="evidence" value="ECO:0000315"/>
    <property type="project" value="WormBase"/>
</dbReference>
<dbReference type="GO" id="GO:0008340">
    <property type="term" value="P:determination of adult lifespan"/>
    <property type="evidence" value="ECO:0000315"/>
    <property type="project" value="WormBase"/>
</dbReference>
<dbReference type="GO" id="GO:0019915">
    <property type="term" value="P:lipid storage"/>
    <property type="evidence" value="ECO:0000315"/>
    <property type="project" value="WormBase"/>
</dbReference>
<dbReference type="GO" id="GO:0002119">
    <property type="term" value="P:nematode larval development"/>
    <property type="evidence" value="ECO:0000315"/>
    <property type="project" value="WormBase"/>
</dbReference>
<dbReference type="GO" id="GO:2000193">
    <property type="term" value="P:positive regulation of fatty acid transport"/>
    <property type="evidence" value="ECO:0000315"/>
    <property type="project" value="WormBase"/>
</dbReference>
<dbReference type="GO" id="GO:0040010">
    <property type="term" value="P:positive regulation of growth rate"/>
    <property type="evidence" value="ECO:0000315"/>
    <property type="project" value="WormBase"/>
</dbReference>
<dbReference type="GO" id="GO:0040018">
    <property type="term" value="P:positive regulation of multicellular organism growth"/>
    <property type="evidence" value="ECO:0000315"/>
    <property type="project" value="WormBase"/>
</dbReference>
<dbReference type="GO" id="GO:0071805">
    <property type="term" value="P:potassium ion transmembrane transport"/>
    <property type="evidence" value="ECO:0000318"/>
    <property type="project" value="GO_Central"/>
</dbReference>
<dbReference type="GO" id="GO:0051453">
    <property type="term" value="P:regulation of intracellular pH"/>
    <property type="evidence" value="ECO:0000318"/>
    <property type="project" value="GO_Central"/>
</dbReference>
<dbReference type="GO" id="GO:0043051">
    <property type="term" value="P:regulation of nematode pharyngeal pumping"/>
    <property type="evidence" value="ECO:0000315"/>
    <property type="project" value="WormBase"/>
</dbReference>
<dbReference type="GO" id="GO:0090087">
    <property type="term" value="P:regulation of peptide transport"/>
    <property type="evidence" value="ECO:0000315"/>
    <property type="project" value="WormBase"/>
</dbReference>
<dbReference type="GO" id="GO:0006885">
    <property type="term" value="P:regulation of pH"/>
    <property type="evidence" value="ECO:0000315"/>
    <property type="project" value="WormBase"/>
</dbReference>
<dbReference type="GO" id="GO:0022414">
    <property type="term" value="P:reproductive process"/>
    <property type="evidence" value="ECO:0000315"/>
    <property type="project" value="WormBase"/>
</dbReference>
<dbReference type="GO" id="GO:0098719">
    <property type="term" value="P:sodium ion import across plasma membrane"/>
    <property type="evidence" value="ECO:0000318"/>
    <property type="project" value="GO_Central"/>
</dbReference>
<dbReference type="Gene3D" id="6.10.140.1330">
    <property type="match status" value="1"/>
</dbReference>
<dbReference type="InterPro" id="IPR018422">
    <property type="entry name" value="Cation/H_exchanger_CPA1"/>
</dbReference>
<dbReference type="InterPro" id="IPR006153">
    <property type="entry name" value="Cation/H_exchanger_TM"/>
</dbReference>
<dbReference type="InterPro" id="IPR004709">
    <property type="entry name" value="NaH_exchanger"/>
</dbReference>
<dbReference type="NCBIfam" id="TIGR00840">
    <property type="entry name" value="b_cpa1"/>
    <property type="match status" value="1"/>
</dbReference>
<dbReference type="PANTHER" id="PTHR10110:SF92">
    <property type="entry name" value="NA(+)_H(+) EXCHANGER PROTEIN 2-RELATED"/>
    <property type="match status" value="1"/>
</dbReference>
<dbReference type="PANTHER" id="PTHR10110">
    <property type="entry name" value="SODIUM/HYDROGEN EXCHANGER"/>
    <property type="match status" value="1"/>
</dbReference>
<dbReference type="Pfam" id="PF00999">
    <property type="entry name" value="Na_H_Exchanger"/>
    <property type="match status" value="1"/>
</dbReference>
<dbReference type="PRINTS" id="PR01084">
    <property type="entry name" value="NAHEXCHNGR"/>
</dbReference>
<gene>
    <name evidence="10 11" type="primary">nhx-2</name>
    <name type="ORF">B0495.4</name>
</gene>
<keyword id="KW-0050">Antiport</keyword>
<keyword id="KW-1003">Cell membrane</keyword>
<keyword id="KW-0406">Ion transport</keyword>
<keyword id="KW-0472">Membrane</keyword>
<keyword id="KW-1185">Reference proteome</keyword>
<keyword id="KW-0915">Sodium</keyword>
<keyword id="KW-0739">Sodium transport</keyword>
<keyword id="KW-0812">Transmembrane</keyword>
<keyword id="KW-1133">Transmembrane helix</keyword>
<keyword id="KW-0813">Transport</keyword>
<protein>
    <recommendedName>
        <fullName evidence="8">Na(+)/H(+) exchanger protein 2</fullName>
    </recommendedName>
    <alternativeName>
        <fullName evidence="8">Na(+)/H(+) antiporter nhx-2</fullName>
    </alternativeName>
</protein>